<sequence length="198" mass="21510">MIEFVYPHTQLVAGVDEVGRGPLVGAVVTAAVILDPARPIAGLNDSKKLSEKRRLVLCEEIKEKALSWSLGRAEPHEIDELNILHATMLAMQRAVAGLHIAPEYVLIDGNRCPKLPMPSMAVVKGDSRVPEISAASILAKVTRDAEMAALDIVFPQYGFAQHKGYPTAFHLEKLAEHGATEHHRRSFGPVKRALGLAS</sequence>
<feature type="chain" id="PRO_1000031138" description="Ribonuclease HII">
    <location>
        <begin position="1"/>
        <end position="198"/>
    </location>
</feature>
<feature type="domain" description="RNase H type-2" evidence="2">
    <location>
        <begin position="10"/>
        <end position="198"/>
    </location>
</feature>
<feature type="binding site" evidence="1">
    <location>
        <position position="16"/>
    </location>
    <ligand>
        <name>a divalent metal cation</name>
        <dbReference type="ChEBI" id="CHEBI:60240"/>
    </ligand>
</feature>
<feature type="binding site" evidence="1">
    <location>
        <position position="17"/>
    </location>
    <ligand>
        <name>a divalent metal cation</name>
        <dbReference type="ChEBI" id="CHEBI:60240"/>
    </ligand>
</feature>
<feature type="binding site" evidence="1">
    <location>
        <position position="108"/>
    </location>
    <ligand>
        <name>a divalent metal cation</name>
        <dbReference type="ChEBI" id="CHEBI:60240"/>
    </ligand>
</feature>
<accession>Q1RG06</accession>
<organism>
    <name type="scientific">Escherichia coli (strain UTI89 / UPEC)</name>
    <dbReference type="NCBI Taxonomy" id="364106"/>
    <lineage>
        <taxon>Bacteria</taxon>
        <taxon>Pseudomonadati</taxon>
        <taxon>Pseudomonadota</taxon>
        <taxon>Gammaproteobacteria</taxon>
        <taxon>Enterobacterales</taxon>
        <taxon>Enterobacteriaceae</taxon>
        <taxon>Escherichia</taxon>
    </lineage>
</organism>
<evidence type="ECO:0000255" key="1">
    <source>
        <dbReference type="HAMAP-Rule" id="MF_00052"/>
    </source>
</evidence>
<evidence type="ECO:0000255" key="2">
    <source>
        <dbReference type="PROSITE-ProRule" id="PRU01319"/>
    </source>
</evidence>
<keyword id="KW-0963">Cytoplasm</keyword>
<keyword id="KW-0255">Endonuclease</keyword>
<keyword id="KW-0378">Hydrolase</keyword>
<keyword id="KW-0464">Manganese</keyword>
<keyword id="KW-0479">Metal-binding</keyword>
<keyword id="KW-0540">Nuclease</keyword>
<dbReference type="EC" id="3.1.26.4" evidence="1"/>
<dbReference type="EMBL" id="CP000243">
    <property type="protein sequence ID" value="ABE05708.1"/>
    <property type="molecule type" value="Genomic_DNA"/>
</dbReference>
<dbReference type="RefSeq" id="WP_000569434.1">
    <property type="nucleotide sequence ID" value="NZ_CP064825.1"/>
</dbReference>
<dbReference type="SMR" id="Q1RG06"/>
<dbReference type="KEGG" id="eci:UTI89_C0198"/>
<dbReference type="HOGENOM" id="CLU_036532_3_2_6"/>
<dbReference type="Proteomes" id="UP000001952">
    <property type="component" value="Chromosome"/>
</dbReference>
<dbReference type="GO" id="GO:0005737">
    <property type="term" value="C:cytoplasm"/>
    <property type="evidence" value="ECO:0007669"/>
    <property type="project" value="UniProtKB-SubCell"/>
</dbReference>
<dbReference type="GO" id="GO:0032299">
    <property type="term" value="C:ribonuclease H2 complex"/>
    <property type="evidence" value="ECO:0007669"/>
    <property type="project" value="TreeGrafter"/>
</dbReference>
<dbReference type="GO" id="GO:0030145">
    <property type="term" value="F:manganese ion binding"/>
    <property type="evidence" value="ECO:0007669"/>
    <property type="project" value="UniProtKB-UniRule"/>
</dbReference>
<dbReference type="GO" id="GO:0003723">
    <property type="term" value="F:RNA binding"/>
    <property type="evidence" value="ECO:0007669"/>
    <property type="project" value="InterPro"/>
</dbReference>
<dbReference type="GO" id="GO:0004523">
    <property type="term" value="F:RNA-DNA hybrid ribonuclease activity"/>
    <property type="evidence" value="ECO:0007669"/>
    <property type="project" value="UniProtKB-UniRule"/>
</dbReference>
<dbReference type="GO" id="GO:0043137">
    <property type="term" value="P:DNA replication, removal of RNA primer"/>
    <property type="evidence" value="ECO:0007669"/>
    <property type="project" value="TreeGrafter"/>
</dbReference>
<dbReference type="GO" id="GO:0006298">
    <property type="term" value="P:mismatch repair"/>
    <property type="evidence" value="ECO:0007669"/>
    <property type="project" value="TreeGrafter"/>
</dbReference>
<dbReference type="CDD" id="cd07182">
    <property type="entry name" value="RNase_HII_bacteria_HII_like"/>
    <property type="match status" value="1"/>
</dbReference>
<dbReference type="FunFam" id="3.30.420.10:FF:000006">
    <property type="entry name" value="Ribonuclease HII"/>
    <property type="match status" value="1"/>
</dbReference>
<dbReference type="Gene3D" id="3.30.420.10">
    <property type="entry name" value="Ribonuclease H-like superfamily/Ribonuclease H"/>
    <property type="match status" value="1"/>
</dbReference>
<dbReference type="HAMAP" id="MF_00052_B">
    <property type="entry name" value="RNase_HII_B"/>
    <property type="match status" value="1"/>
</dbReference>
<dbReference type="InterPro" id="IPR022898">
    <property type="entry name" value="RNase_HII"/>
</dbReference>
<dbReference type="InterPro" id="IPR001352">
    <property type="entry name" value="RNase_HII/HIII"/>
</dbReference>
<dbReference type="InterPro" id="IPR024567">
    <property type="entry name" value="RNase_HII/HIII_dom"/>
</dbReference>
<dbReference type="InterPro" id="IPR012337">
    <property type="entry name" value="RNaseH-like_sf"/>
</dbReference>
<dbReference type="InterPro" id="IPR036397">
    <property type="entry name" value="RNaseH_sf"/>
</dbReference>
<dbReference type="NCBIfam" id="NF000594">
    <property type="entry name" value="PRK00015.1-1"/>
    <property type="match status" value="1"/>
</dbReference>
<dbReference type="NCBIfam" id="NF000595">
    <property type="entry name" value="PRK00015.1-3"/>
    <property type="match status" value="1"/>
</dbReference>
<dbReference type="NCBIfam" id="NF000596">
    <property type="entry name" value="PRK00015.1-4"/>
    <property type="match status" value="1"/>
</dbReference>
<dbReference type="PANTHER" id="PTHR10954">
    <property type="entry name" value="RIBONUCLEASE H2 SUBUNIT A"/>
    <property type="match status" value="1"/>
</dbReference>
<dbReference type="PANTHER" id="PTHR10954:SF18">
    <property type="entry name" value="RIBONUCLEASE HII"/>
    <property type="match status" value="1"/>
</dbReference>
<dbReference type="Pfam" id="PF01351">
    <property type="entry name" value="RNase_HII"/>
    <property type="match status" value="1"/>
</dbReference>
<dbReference type="SUPFAM" id="SSF53098">
    <property type="entry name" value="Ribonuclease H-like"/>
    <property type="match status" value="1"/>
</dbReference>
<dbReference type="PROSITE" id="PS51975">
    <property type="entry name" value="RNASE_H_2"/>
    <property type="match status" value="1"/>
</dbReference>
<gene>
    <name evidence="1" type="primary">rnhB</name>
    <name type="ordered locus">UTI89_C0198</name>
</gene>
<protein>
    <recommendedName>
        <fullName evidence="1">Ribonuclease HII</fullName>
        <shortName evidence="1">RNase HII</shortName>
        <ecNumber evidence="1">3.1.26.4</ecNumber>
    </recommendedName>
</protein>
<comment type="function">
    <text evidence="1">Endonuclease that specifically degrades the RNA of RNA-DNA hybrids.</text>
</comment>
<comment type="catalytic activity">
    <reaction evidence="1">
        <text>Endonucleolytic cleavage to 5'-phosphomonoester.</text>
        <dbReference type="EC" id="3.1.26.4"/>
    </reaction>
</comment>
<comment type="cofactor">
    <cofactor evidence="1">
        <name>Mn(2+)</name>
        <dbReference type="ChEBI" id="CHEBI:29035"/>
    </cofactor>
    <cofactor evidence="1">
        <name>Mg(2+)</name>
        <dbReference type="ChEBI" id="CHEBI:18420"/>
    </cofactor>
    <text evidence="1">Manganese or magnesium. Binds 1 divalent metal ion per monomer in the absence of substrate. May bind a second metal ion after substrate binding.</text>
</comment>
<comment type="subcellular location">
    <subcellularLocation>
        <location evidence="1">Cytoplasm</location>
    </subcellularLocation>
</comment>
<comment type="similarity">
    <text evidence="1">Belongs to the RNase HII family.</text>
</comment>
<name>RNH2_ECOUT</name>
<reference key="1">
    <citation type="journal article" date="2006" name="Proc. Natl. Acad. Sci. U.S.A.">
        <title>Identification of genes subject to positive selection in uropathogenic strains of Escherichia coli: a comparative genomics approach.</title>
        <authorList>
            <person name="Chen S.L."/>
            <person name="Hung C.-S."/>
            <person name="Xu J."/>
            <person name="Reigstad C.S."/>
            <person name="Magrini V."/>
            <person name="Sabo A."/>
            <person name="Blasiar D."/>
            <person name="Bieri T."/>
            <person name="Meyer R.R."/>
            <person name="Ozersky P."/>
            <person name="Armstrong J.R."/>
            <person name="Fulton R.S."/>
            <person name="Latreille J.P."/>
            <person name="Spieth J."/>
            <person name="Hooton T.M."/>
            <person name="Mardis E.R."/>
            <person name="Hultgren S.J."/>
            <person name="Gordon J.I."/>
        </authorList>
    </citation>
    <scope>NUCLEOTIDE SEQUENCE [LARGE SCALE GENOMIC DNA]</scope>
    <source>
        <strain>UTI89 / UPEC</strain>
    </source>
</reference>
<proteinExistence type="inferred from homology"/>